<protein>
    <recommendedName>
        <fullName>Kunitz-type U15-theraphotoxin-Hs1a</fullName>
        <shortName>U15-TRTX-Hs1a</shortName>
    </recommendedName>
    <alternativeName>
        <fullName evidence="6">Huwentoxin HW11c22</fullName>
    </alternativeName>
    <alternativeName>
        <fullName evidence="5">Kunitz-type serine protease inhibitor HWTX-XI-IS2</fullName>
    </alternativeName>
</protein>
<accession>P0DJ75</accession>
<accession>A0A023WB32</accession>
<comment type="function">
    <text evidence="2">Serine protease inhibitor that inhibits trypsin at a molar ratio of 1:1.</text>
</comment>
<comment type="subcellular location">
    <subcellularLocation>
        <location evidence="8">Secreted</location>
    </subcellularLocation>
</comment>
<comment type="tissue specificity">
    <text evidence="8">Expressed by the venom gland.</text>
</comment>
<comment type="similarity">
    <text evidence="7">Belongs to the venom Kunitz-type family. 03 (sub-Kunitz) subfamily.</text>
</comment>
<keyword id="KW-1015">Disulfide bond</keyword>
<keyword id="KW-0646">Protease inhibitor</keyword>
<keyword id="KW-0964">Secreted</keyword>
<keyword id="KW-0722">Serine protease inhibitor</keyword>
<keyword id="KW-0732">Signal</keyword>
<organism>
    <name type="scientific">Cyriopagopus schmidti</name>
    <name type="common">Chinese bird spider</name>
    <name type="synonym">Haplopelma schmidti</name>
    <dbReference type="NCBI Taxonomy" id="29017"/>
    <lineage>
        <taxon>Eukaryota</taxon>
        <taxon>Metazoa</taxon>
        <taxon>Ecdysozoa</taxon>
        <taxon>Arthropoda</taxon>
        <taxon>Chelicerata</taxon>
        <taxon>Arachnida</taxon>
        <taxon>Araneae</taxon>
        <taxon>Mygalomorphae</taxon>
        <taxon>Theraphosidae</taxon>
        <taxon>Cyriopagopus</taxon>
    </lineage>
</organism>
<name>VKT2_CYRSC</name>
<proteinExistence type="inferred from homology"/>
<reference key="1">
    <citation type="journal article" date="2008" name="PLoS ONE">
        <title>Discovery of a distinct superfamily of Kunitz-type toxin (KTT) from tarantulas.</title>
        <authorList>
            <person name="Yuan C.-H."/>
            <person name="He Q.-Y."/>
            <person name="Peng K."/>
            <person name="Diao J.-B."/>
            <person name="Jiang L.-P."/>
            <person name="Tang X."/>
            <person name="Liang S.-P."/>
        </authorList>
    </citation>
    <scope>NUCLEOTIDE SEQUENCE [MRNA]</scope>
    <source>
        <tissue>Venom gland</tissue>
    </source>
</reference>
<reference evidence="9" key="2">
    <citation type="journal article" date="2014" name="Peptides">
        <title>Molecular cloning, bioinformatics analysis and functional characterization of HWTX-XI toxin superfamily from the spider Ornithoctonus huwena.</title>
        <authorList>
            <person name="Jiang L."/>
            <person name="Deng M."/>
            <person name="Duan Z."/>
            <person name="Tang X."/>
            <person name="Liang S."/>
        </authorList>
    </citation>
    <scope>NUCLEOTIDE SEQUENCE [GENOMIC DNA]</scope>
</reference>
<sequence>MGTARFLSAVLLLSVLLMVTFPALLSAEYHDGRVDICSLPSDSGDCLRFFEMWYFDGTTCTKFVYGGYGGNDNRFPTEKACMKRCAKA</sequence>
<evidence type="ECO:0000250" key="1"/>
<evidence type="ECO:0000250" key="2">
    <source>
        <dbReference type="UniProtKB" id="P68425"/>
    </source>
</evidence>
<evidence type="ECO:0000255" key="3"/>
<evidence type="ECO:0000255" key="4">
    <source>
        <dbReference type="PROSITE-ProRule" id="PRU00031"/>
    </source>
</evidence>
<evidence type="ECO:0000303" key="5">
    <source>
    </source>
</evidence>
<evidence type="ECO:0000303" key="6">
    <source>
    </source>
</evidence>
<evidence type="ECO:0000305" key="7"/>
<evidence type="ECO:0000305" key="8">
    <source>
    </source>
</evidence>
<evidence type="ECO:0000312" key="9">
    <source>
        <dbReference type="EMBL" id="AHY30313.1"/>
    </source>
</evidence>
<dbReference type="EMBL" id="KF160302">
    <property type="protein sequence ID" value="AHY30313.1"/>
    <property type="molecule type" value="Genomic_DNA"/>
</dbReference>
<dbReference type="SMR" id="P0DJ75"/>
<dbReference type="ArachnoServer" id="AS000481">
    <property type="toxin name" value="U15-theraphotoxin-Hs1a"/>
</dbReference>
<dbReference type="GO" id="GO:0005576">
    <property type="term" value="C:extracellular region"/>
    <property type="evidence" value="ECO:0007669"/>
    <property type="project" value="UniProtKB-SubCell"/>
</dbReference>
<dbReference type="GO" id="GO:0015459">
    <property type="term" value="F:potassium channel regulator activity"/>
    <property type="evidence" value="ECO:0007669"/>
    <property type="project" value="UniProtKB-KW"/>
</dbReference>
<dbReference type="GO" id="GO:0004867">
    <property type="term" value="F:serine-type endopeptidase inhibitor activity"/>
    <property type="evidence" value="ECO:0007669"/>
    <property type="project" value="UniProtKB-KW"/>
</dbReference>
<dbReference type="GO" id="GO:0090729">
    <property type="term" value="F:toxin activity"/>
    <property type="evidence" value="ECO:0007669"/>
    <property type="project" value="UniProtKB-KW"/>
</dbReference>
<dbReference type="GO" id="GO:0044562">
    <property type="term" value="P:envenomation resulting in negative regulation of voltage-gated potassium channel activity in another organism"/>
    <property type="evidence" value="ECO:0007669"/>
    <property type="project" value="UniProtKB-ARBA"/>
</dbReference>
<dbReference type="CDD" id="cd22598">
    <property type="entry name" value="Kunitz_huwentoxin"/>
    <property type="match status" value="1"/>
</dbReference>
<dbReference type="FunFam" id="4.10.410.10:FF:000020">
    <property type="entry name" value="Collagen, type VI, alpha 3"/>
    <property type="match status" value="1"/>
</dbReference>
<dbReference type="Gene3D" id="4.10.410.10">
    <property type="entry name" value="Pancreatic trypsin inhibitor Kunitz domain"/>
    <property type="match status" value="1"/>
</dbReference>
<dbReference type="InterPro" id="IPR002223">
    <property type="entry name" value="Kunitz_BPTI"/>
</dbReference>
<dbReference type="InterPro" id="IPR036880">
    <property type="entry name" value="Kunitz_BPTI_sf"/>
</dbReference>
<dbReference type="InterPro" id="IPR051388">
    <property type="entry name" value="Serpin_venom_toxin"/>
</dbReference>
<dbReference type="PANTHER" id="PTHR46751">
    <property type="entry name" value="EPPIN"/>
    <property type="match status" value="1"/>
</dbReference>
<dbReference type="PANTHER" id="PTHR46751:SF1">
    <property type="entry name" value="WAP FOUR-DISULFIDE CORE DOMAIN PROTEIN 6A"/>
    <property type="match status" value="1"/>
</dbReference>
<dbReference type="Pfam" id="PF00014">
    <property type="entry name" value="Kunitz_BPTI"/>
    <property type="match status" value="1"/>
</dbReference>
<dbReference type="PRINTS" id="PR00759">
    <property type="entry name" value="BASICPTASE"/>
</dbReference>
<dbReference type="SMART" id="SM00131">
    <property type="entry name" value="KU"/>
    <property type="match status" value="1"/>
</dbReference>
<dbReference type="SUPFAM" id="SSF57362">
    <property type="entry name" value="BPTI-like"/>
    <property type="match status" value="1"/>
</dbReference>
<dbReference type="PROSITE" id="PS50279">
    <property type="entry name" value="BPTI_KUNITZ_2"/>
    <property type="match status" value="1"/>
</dbReference>
<feature type="signal peptide" evidence="3">
    <location>
        <begin position="1"/>
        <end position="27"/>
    </location>
</feature>
<feature type="propeptide" id="PRO_0000413824" evidence="1">
    <location>
        <begin position="28"/>
        <end position="33"/>
    </location>
</feature>
<feature type="chain" id="PRO_0000413825" description="Kunitz-type U15-theraphotoxin-Hs1a">
    <location>
        <begin position="34"/>
        <end position="88"/>
    </location>
</feature>
<feature type="domain" description="BPTI/Kunitz inhibitor" evidence="4">
    <location>
        <begin position="37"/>
        <end position="85"/>
    </location>
</feature>
<feature type="site" description="May bind Kv1" evidence="1">
    <location>
        <position position="39"/>
    </location>
</feature>
<feature type="site" description="Reactive bond for chymotrypsin" evidence="1">
    <location>
        <begin position="47"/>
        <end position="48"/>
    </location>
</feature>
<feature type="disulfide bond" evidence="4">
    <location>
        <begin position="37"/>
        <end position="85"/>
    </location>
</feature>
<feature type="disulfide bond" evidence="4">
    <location>
        <begin position="60"/>
        <end position="81"/>
    </location>
</feature>
<feature type="sequence conflict" description="In Ref. 2; AHY30313." evidence="7" ref="2">
    <original>L</original>
    <variation>P</variation>
    <location>
        <position position="16"/>
    </location>
</feature>